<comment type="function">
    <text evidence="1">This is one of the proteins that bind and probably mediate the attachment of the 5S RNA into the large ribosomal subunit, where it forms part of the central protuberance. In the 70S ribosome it contacts protein S13 of the 30S subunit (bridge B1b), connecting the 2 subunits; this bridge is implicated in subunit movement. Contacts the P site tRNA; the 5S rRNA and some of its associated proteins might help stabilize positioning of ribosome-bound tRNAs.</text>
</comment>
<comment type="subunit">
    <text evidence="1">Part of the 50S ribosomal subunit; part of the 5S rRNA/L5/L18/L25 subcomplex. Contacts the 5S rRNA and the P site tRNA. Forms a bridge to the 30S subunit in the 70S ribosome.</text>
</comment>
<comment type="similarity">
    <text evidence="1">Belongs to the universal ribosomal protein uL5 family.</text>
</comment>
<name>RL5_WOLTR</name>
<keyword id="KW-1185">Reference proteome</keyword>
<keyword id="KW-0687">Ribonucleoprotein</keyword>
<keyword id="KW-0689">Ribosomal protein</keyword>
<keyword id="KW-0694">RNA-binding</keyword>
<keyword id="KW-0699">rRNA-binding</keyword>
<keyword id="KW-0820">tRNA-binding</keyword>
<dbReference type="EMBL" id="AE017321">
    <property type="protein sequence ID" value="AAW70918.1"/>
    <property type="molecule type" value="Genomic_DNA"/>
</dbReference>
<dbReference type="RefSeq" id="WP_011256528.1">
    <property type="nucleotide sequence ID" value="NC_006833.1"/>
</dbReference>
<dbReference type="SMR" id="Q5GSV6"/>
<dbReference type="STRING" id="292805.Wbm0329"/>
<dbReference type="KEGG" id="wbm:Wbm0329"/>
<dbReference type="eggNOG" id="COG0094">
    <property type="taxonomic scope" value="Bacteria"/>
</dbReference>
<dbReference type="HOGENOM" id="CLU_061015_2_1_5"/>
<dbReference type="Proteomes" id="UP000000534">
    <property type="component" value="Chromosome"/>
</dbReference>
<dbReference type="GO" id="GO:1990904">
    <property type="term" value="C:ribonucleoprotein complex"/>
    <property type="evidence" value="ECO:0007669"/>
    <property type="project" value="UniProtKB-KW"/>
</dbReference>
<dbReference type="GO" id="GO:0005840">
    <property type="term" value="C:ribosome"/>
    <property type="evidence" value="ECO:0007669"/>
    <property type="project" value="UniProtKB-KW"/>
</dbReference>
<dbReference type="GO" id="GO:0019843">
    <property type="term" value="F:rRNA binding"/>
    <property type="evidence" value="ECO:0007669"/>
    <property type="project" value="UniProtKB-UniRule"/>
</dbReference>
<dbReference type="GO" id="GO:0003735">
    <property type="term" value="F:structural constituent of ribosome"/>
    <property type="evidence" value="ECO:0007669"/>
    <property type="project" value="InterPro"/>
</dbReference>
<dbReference type="GO" id="GO:0000049">
    <property type="term" value="F:tRNA binding"/>
    <property type="evidence" value="ECO:0007669"/>
    <property type="project" value="UniProtKB-UniRule"/>
</dbReference>
<dbReference type="GO" id="GO:0006412">
    <property type="term" value="P:translation"/>
    <property type="evidence" value="ECO:0007669"/>
    <property type="project" value="UniProtKB-UniRule"/>
</dbReference>
<dbReference type="FunFam" id="3.30.1440.10:FF:000001">
    <property type="entry name" value="50S ribosomal protein L5"/>
    <property type="match status" value="1"/>
</dbReference>
<dbReference type="Gene3D" id="3.30.1440.10">
    <property type="match status" value="1"/>
</dbReference>
<dbReference type="HAMAP" id="MF_01333_B">
    <property type="entry name" value="Ribosomal_uL5_B"/>
    <property type="match status" value="1"/>
</dbReference>
<dbReference type="InterPro" id="IPR002132">
    <property type="entry name" value="Ribosomal_uL5"/>
</dbReference>
<dbReference type="InterPro" id="IPR020930">
    <property type="entry name" value="Ribosomal_uL5_bac-type"/>
</dbReference>
<dbReference type="InterPro" id="IPR031309">
    <property type="entry name" value="Ribosomal_uL5_C"/>
</dbReference>
<dbReference type="InterPro" id="IPR020929">
    <property type="entry name" value="Ribosomal_uL5_CS"/>
</dbReference>
<dbReference type="InterPro" id="IPR022803">
    <property type="entry name" value="Ribosomal_uL5_dom_sf"/>
</dbReference>
<dbReference type="InterPro" id="IPR031310">
    <property type="entry name" value="Ribosomal_uL5_N"/>
</dbReference>
<dbReference type="NCBIfam" id="NF000585">
    <property type="entry name" value="PRK00010.1"/>
    <property type="match status" value="1"/>
</dbReference>
<dbReference type="PANTHER" id="PTHR11994">
    <property type="entry name" value="60S RIBOSOMAL PROTEIN L11-RELATED"/>
    <property type="match status" value="1"/>
</dbReference>
<dbReference type="Pfam" id="PF00281">
    <property type="entry name" value="Ribosomal_L5"/>
    <property type="match status" value="1"/>
</dbReference>
<dbReference type="Pfam" id="PF00673">
    <property type="entry name" value="Ribosomal_L5_C"/>
    <property type="match status" value="1"/>
</dbReference>
<dbReference type="PIRSF" id="PIRSF002161">
    <property type="entry name" value="Ribosomal_L5"/>
    <property type="match status" value="1"/>
</dbReference>
<dbReference type="SUPFAM" id="SSF55282">
    <property type="entry name" value="RL5-like"/>
    <property type="match status" value="1"/>
</dbReference>
<dbReference type="PROSITE" id="PS00358">
    <property type="entry name" value="RIBOSOMAL_L5"/>
    <property type="match status" value="1"/>
</dbReference>
<organism>
    <name type="scientific">Wolbachia sp. subsp. Brugia malayi (strain TRS)</name>
    <dbReference type="NCBI Taxonomy" id="292805"/>
    <lineage>
        <taxon>Bacteria</taxon>
        <taxon>Pseudomonadati</taxon>
        <taxon>Pseudomonadota</taxon>
        <taxon>Alphaproteobacteria</taxon>
        <taxon>Rickettsiales</taxon>
        <taxon>Anaplasmataceae</taxon>
        <taxon>Wolbachieae</taxon>
        <taxon>Wolbachia</taxon>
    </lineage>
</organism>
<accession>Q5GSV6</accession>
<evidence type="ECO:0000255" key="1">
    <source>
        <dbReference type="HAMAP-Rule" id="MF_01333"/>
    </source>
</evidence>
<evidence type="ECO:0000305" key="2"/>
<protein>
    <recommendedName>
        <fullName evidence="1">Large ribosomal subunit protein uL5</fullName>
    </recommendedName>
    <alternativeName>
        <fullName evidence="2">50S ribosomal protein L5</fullName>
    </alternativeName>
</protein>
<proteinExistence type="inferred from homology"/>
<reference key="1">
    <citation type="journal article" date="2005" name="PLoS Biol.">
        <title>The Wolbachia genome of Brugia malayi: endosymbiont evolution within a human pathogenic nematode.</title>
        <authorList>
            <person name="Foster J."/>
            <person name="Ganatra M."/>
            <person name="Kamal I."/>
            <person name="Ware J."/>
            <person name="Makarova K."/>
            <person name="Ivanova N."/>
            <person name="Bhattacharyya A."/>
            <person name="Kapatral V."/>
            <person name="Kumar S."/>
            <person name="Posfai J."/>
            <person name="Vincze T."/>
            <person name="Ingram J."/>
            <person name="Moran L."/>
            <person name="Lapidus A."/>
            <person name="Omelchenko M."/>
            <person name="Kyrpides N."/>
            <person name="Ghedin E."/>
            <person name="Wang S."/>
            <person name="Goltsman E."/>
            <person name="Joukov V."/>
            <person name="Ostrovskaya O."/>
            <person name="Tsukerman K."/>
            <person name="Mazur M."/>
            <person name="Comb D."/>
            <person name="Koonin E."/>
            <person name="Slatko B."/>
        </authorList>
    </citation>
    <scope>NUCLEOTIDE SEQUENCE [LARGE SCALE GENOMIC DNA]</scope>
    <source>
        <strain>TRS</strain>
    </source>
</reference>
<feature type="chain" id="PRO_0000243085" description="Large ribosomal subunit protein uL5">
    <location>
        <begin position="1"/>
        <end position="177"/>
    </location>
</feature>
<sequence length="177" mass="20107">MFKELYRDSIVKSLKDKFNYGNIMQVPKLVKVCINMGVGGAATDNKAINEPFDDLYLIAGQKPVSTFAKKSISGFKIRKGATVGCKVTLRRDKMYEFLERLIYVALPREKDFRGFSVKQFDGNGNFSFGIKEHISFLEIDYDKISKIRGMDINIVTSAASDKEAKELLLAFKFPFFD</sequence>
<gene>
    <name evidence="1" type="primary">rplE</name>
    <name type="ordered locus">Wbm0329</name>
</gene>